<proteinExistence type="inferred from homology"/>
<reference key="1">
    <citation type="journal article" date="2002" name="Proc. Natl. Acad. Sci. U.S.A.">
        <title>Genome sequence of a serotype M3 strain of group A Streptococcus: phage-encoded toxins, the high-virulence phenotype, and clone emergence.</title>
        <authorList>
            <person name="Beres S.B."/>
            <person name="Sylva G.L."/>
            <person name="Barbian K.D."/>
            <person name="Lei B."/>
            <person name="Hoff J.S."/>
            <person name="Mammarella N.D."/>
            <person name="Liu M.-Y."/>
            <person name="Smoot J.C."/>
            <person name="Porcella S.F."/>
            <person name="Parkins L.D."/>
            <person name="Campbell D.S."/>
            <person name="Smith T.M."/>
            <person name="McCormick J.K."/>
            <person name="Leung D.Y.M."/>
            <person name="Schlievert P.M."/>
            <person name="Musser J.M."/>
        </authorList>
    </citation>
    <scope>NUCLEOTIDE SEQUENCE [LARGE SCALE GENOMIC DNA]</scope>
    <source>
        <strain>ATCC BAA-595 / MGAS315</strain>
    </source>
</reference>
<organism>
    <name type="scientific">Streptococcus pyogenes serotype M3 (strain ATCC BAA-595 / MGAS315)</name>
    <dbReference type="NCBI Taxonomy" id="198466"/>
    <lineage>
        <taxon>Bacteria</taxon>
        <taxon>Bacillati</taxon>
        <taxon>Bacillota</taxon>
        <taxon>Bacilli</taxon>
        <taxon>Lactobacillales</taxon>
        <taxon>Streptococcaceae</taxon>
        <taxon>Streptococcus</taxon>
    </lineage>
</organism>
<sequence>MNPLIQSLTEGQLRSDIPNFRPGDTVRVHAKVVEGTRERIQIFEGVVISRKGQGISEMYTVRKISGGIGVERTFPIHTPRVDKIEVIRHGKVRRAKLYYLRALQGKAARIKEIRR</sequence>
<feature type="chain" id="PRO_0000163545" description="Large ribosomal subunit protein bL19">
    <location>
        <begin position="1"/>
        <end position="115"/>
    </location>
</feature>
<name>RL19_STRP3</name>
<protein>
    <recommendedName>
        <fullName evidence="1">Large ribosomal subunit protein bL19</fullName>
    </recommendedName>
    <alternativeName>
        <fullName evidence="2">50S ribosomal protein L19</fullName>
    </alternativeName>
</protein>
<evidence type="ECO:0000255" key="1">
    <source>
        <dbReference type="HAMAP-Rule" id="MF_00402"/>
    </source>
</evidence>
<evidence type="ECO:0000305" key="2"/>
<accession>P0DE14</accession>
<accession>P58169</accession>
<accession>P66085</accession>
<dbReference type="EMBL" id="AE014074">
    <property type="protein sequence ID" value="AAM79081.1"/>
    <property type="molecule type" value="Genomic_DNA"/>
</dbReference>
<dbReference type="RefSeq" id="WP_002985298.1">
    <property type="nucleotide sequence ID" value="NC_004070.1"/>
</dbReference>
<dbReference type="SMR" id="P0DE14"/>
<dbReference type="GeneID" id="69901140"/>
<dbReference type="KEGG" id="spg:SpyM3_0474"/>
<dbReference type="HOGENOM" id="CLU_103507_2_1_9"/>
<dbReference type="Proteomes" id="UP000000564">
    <property type="component" value="Chromosome"/>
</dbReference>
<dbReference type="GO" id="GO:0022625">
    <property type="term" value="C:cytosolic large ribosomal subunit"/>
    <property type="evidence" value="ECO:0007669"/>
    <property type="project" value="TreeGrafter"/>
</dbReference>
<dbReference type="GO" id="GO:0003735">
    <property type="term" value="F:structural constituent of ribosome"/>
    <property type="evidence" value="ECO:0007669"/>
    <property type="project" value="InterPro"/>
</dbReference>
<dbReference type="GO" id="GO:0006412">
    <property type="term" value="P:translation"/>
    <property type="evidence" value="ECO:0007669"/>
    <property type="project" value="UniProtKB-UniRule"/>
</dbReference>
<dbReference type="FunFam" id="2.30.30.790:FF:000001">
    <property type="entry name" value="50S ribosomal protein L19"/>
    <property type="match status" value="1"/>
</dbReference>
<dbReference type="Gene3D" id="2.30.30.790">
    <property type="match status" value="1"/>
</dbReference>
<dbReference type="HAMAP" id="MF_00402">
    <property type="entry name" value="Ribosomal_bL19"/>
    <property type="match status" value="1"/>
</dbReference>
<dbReference type="InterPro" id="IPR001857">
    <property type="entry name" value="Ribosomal_bL19"/>
</dbReference>
<dbReference type="InterPro" id="IPR018257">
    <property type="entry name" value="Ribosomal_bL19_CS"/>
</dbReference>
<dbReference type="InterPro" id="IPR038657">
    <property type="entry name" value="Ribosomal_bL19_sf"/>
</dbReference>
<dbReference type="InterPro" id="IPR008991">
    <property type="entry name" value="Translation_prot_SH3-like_sf"/>
</dbReference>
<dbReference type="NCBIfam" id="TIGR01024">
    <property type="entry name" value="rplS_bact"/>
    <property type="match status" value="1"/>
</dbReference>
<dbReference type="PANTHER" id="PTHR15680:SF9">
    <property type="entry name" value="LARGE RIBOSOMAL SUBUNIT PROTEIN BL19M"/>
    <property type="match status" value="1"/>
</dbReference>
<dbReference type="PANTHER" id="PTHR15680">
    <property type="entry name" value="RIBOSOMAL PROTEIN L19"/>
    <property type="match status" value="1"/>
</dbReference>
<dbReference type="Pfam" id="PF01245">
    <property type="entry name" value="Ribosomal_L19"/>
    <property type="match status" value="1"/>
</dbReference>
<dbReference type="PIRSF" id="PIRSF002191">
    <property type="entry name" value="Ribosomal_L19"/>
    <property type="match status" value="1"/>
</dbReference>
<dbReference type="PRINTS" id="PR00061">
    <property type="entry name" value="RIBOSOMALL19"/>
</dbReference>
<dbReference type="SUPFAM" id="SSF50104">
    <property type="entry name" value="Translation proteins SH3-like domain"/>
    <property type="match status" value="1"/>
</dbReference>
<dbReference type="PROSITE" id="PS01015">
    <property type="entry name" value="RIBOSOMAL_L19"/>
    <property type="match status" value="1"/>
</dbReference>
<comment type="function">
    <text evidence="1">This protein is located at the 30S-50S ribosomal subunit interface and may play a role in the structure and function of the aminoacyl-tRNA binding site.</text>
</comment>
<comment type="similarity">
    <text evidence="1">Belongs to the bacterial ribosomal protein bL19 family.</text>
</comment>
<keyword id="KW-0687">Ribonucleoprotein</keyword>
<keyword id="KW-0689">Ribosomal protein</keyword>
<gene>
    <name evidence="1" type="primary">rplS</name>
    <name evidence="1" type="synonym">rpl19</name>
    <name type="ordered locus">SpyM3_0474</name>
</gene>